<keyword id="KW-0560">Oxidoreductase</keyword>
<dbReference type="EC" id="1.8.4.11" evidence="1"/>
<dbReference type="EMBL" id="AF236111">
    <property type="protein sequence ID" value="AAK01489.1"/>
    <property type="molecule type" value="Genomic_DNA"/>
</dbReference>
<dbReference type="SMR" id="Q9APY4"/>
<dbReference type="GO" id="GO:0005737">
    <property type="term" value="C:cytoplasm"/>
    <property type="evidence" value="ECO:0007669"/>
    <property type="project" value="TreeGrafter"/>
</dbReference>
<dbReference type="GO" id="GO:0036456">
    <property type="term" value="F:L-methionine-(S)-S-oxide reductase activity"/>
    <property type="evidence" value="ECO:0007669"/>
    <property type="project" value="TreeGrafter"/>
</dbReference>
<dbReference type="GO" id="GO:0008113">
    <property type="term" value="F:peptide-methionine (S)-S-oxide reductase activity"/>
    <property type="evidence" value="ECO:0007669"/>
    <property type="project" value="UniProtKB-UniRule"/>
</dbReference>
<dbReference type="GO" id="GO:0034599">
    <property type="term" value="P:cellular response to oxidative stress"/>
    <property type="evidence" value="ECO:0007669"/>
    <property type="project" value="TreeGrafter"/>
</dbReference>
<dbReference type="GO" id="GO:0036211">
    <property type="term" value="P:protein modification process"/>
    <property type="evidence" value="ECO:0007669"/>
    <property type="project" value="UniProtKB-UniRule"/>
</dbReference>
<dbReference type="Gene3D" id="3.30.1060.10">
    <property type="entry name" value="Peptide methionine sulphoxide reductase MsrA"/>
    <property type="match status" value="1"/>
</dbReference>
<dbReference type="HAMAP" id="MF_01401">
    <property type="entry name" value="MsrA"/>
    <property type="match status" value="1"/>
</dbReference>
<dbReference type="InterPro" id="IPR002569">
    <property type="entry name" value="Met_Sox_Rdtase_MsrA_dom"/>
</dbReference>
<dbReference type="InterPro" id="IPR036509">
    <property type="entry name" value="Met_Sox_Rdtase_MsrA_sf"/>
</dbReference>
<dbReference type="InterPro" id="IPR050162">
    <property type="entry name" value="MsrA_MetSO_reductase"/>
</dbReference>
<dbReference type="NCBIfam" id="TIGR00401">
    <property type="entry name" value="msrA"/>
    <property type="match status" value="1"/>
</dbReference>
<dbReference type="PANTHER" id="PTHR42799">
    <property type="entry name" value="MITOCHONDRIAL PEPTIDE METHIONINE SULFOXIDE REDUCTASE"/>
    <property type="match status" value="1"/>
</dbReference>
<dbReference type="PANTHER" id="PTHR42799:SF2">
    <property type="entry name" value="MITOCHONDRIAL PEPTIDE METHIONINE SULFOXIDE REDUCTASE"/>
    <property type="match status" value="1"/>
</dbReference>
<dbReference type="Pfam" id="PF01625">
    <property type="entry name" value="PMSR"/>
    <property type="match status" value="1"/>
</dbReference>
<dbReference type="SUPFAM" id="SSF55068">
    <property type="entry name" value="Peptide methionine sulfoxide reductase"/>
    <property type="match status" value="1"/>
</dbReference>
<accession>Q9APY4</accession>
<name>MSRA_CORML</name>
<comment type="function">
    <text evidence="1">Has an important function as a repair enzyme for proteins that have been inactivated by oxidation. Catalyzes the reversible oxidation-reduction of methionine sulfoxide in proteins to methionine.</text>
</comment>
<comment type="catalytic activity">
    <reaction evidence="1">
        <text>L-methionyl-[protein] + [thioredoxin]-disulfide + H2O = L-methionyl-(S)-S-oxide-[protein] + [thioredoxin]-dithiol</text>
        <dbReference type="Rhea" id="RHEA:14217"/>
        <dbReference type="Rhea" id="RHEA-COMP:10698"/>
        <dbReference type="Rhea" id="RHEA-COMP:10700"/>
        <dbReference type="Rhea" id="RHEA-COMP:12313"/>
        <dbReference type="Rhea" id="RHEA-COMP:12315"/>
        <dbReference type="ChEBI" id="CHEBI:15377"/>
        <dbReference type="ChEBI" id="CHEBI:16044"/>
        <dbReference type="ChEBI" id="CHEBI:29950"/>
        <dbReference type="ChEBI" id="CHEBI:44120"/>
        <dbReference type="ChEBI" id="CHEBI:50058"/>
        <dbReference type="EC" id="1.8.4.11"/>
    </reaction>
</comment>
<comment type="catalytic activity">
    <reaction evidence="1">
        <text>[thioredoxin]-disulfide + L-methionine + H2O = L-methionine (S)-S-oxide + [thioredoxin]-dithiol</text>
        <dbReference type="Rhea" id="RHEA:19993"/>
        <dbReference type="Rhea" id="RHEA-COMP:10698"/>
        <dbReference type="Rhea" id="RHEA-COMP:10700"/>
        <dbReference type="ChEBI" id="CHEBI:15377"/>
        <dbReference type="ChEBI" id="CHEBI:29950"/>
        <dbReference type="ChEBI" id="CHEBI:50058"/>
        <dbReference type="ChEBI" id="CHEBI:57844"/>
        <dbReference type="ChEBI" id="CHEBI:58772"/>
        <dbReference type="EC" id="1.8.4.11"/>
    </reaction>
</comment>
<comment type="similarity">
    <text evidence="1">Belongs to the MsrA Met sulfoxide reductase family.</text>
</comment>
<gene>
    <name evidence="1" type="primary">msrA</name>
</gene>
<protein>
    <recommendedName>
        <fullName evidence="1">Peptide methionine sulfoxide reductase MsrA</fullName>
        <shortName evidence="1">Protein-methionine-S-oxide reductase</shortName>
        <ecNumber evidence="1">1.8.4.11</ecNumber>
    </recommendedName>
    <alternativeName>
        <fullName evidence="1">Peptide-methionine (S)-S-oxide reductase</fullName>
        <shortName evidence="1">Peptide Met(O) reductase</shortName>
    </alternativeName>
</protein>
<evidence type="ECO:0000255" key="1">
    <source>
        <dbReference type="HAMAP-Rule" id="MF_01401"/>
    </source>
</evidence>
<feature type="chain" id="PRO_0000138544" description="Peptide methionine sulfoxide reductase MsrA">
    <location>
        <begin position="1"/>
        <end position="217"/>
    </location>
</feature>
<feature type="active site" evidence="1">
    <location>
        <position position="56"/>
    </location>
</feature>
<sequence length="217" mass="23891">MAWFFAPEPVMVTADEALKGGRHTVLENPAPHTVLGTPVTGPWKEGQQRIWIGLGCFWGVEQMYWQMDGVEGTSVGYAGGFTPNPTYREVCSGRTGHTEIVEVVYDPSKISLEQLVARGLEAHDPTQGFRQGNDVGTQYRSAYYTENEEGAARVKAVVDAYGETLKQHGFGEITTEIGVISPSEYFLAEDYHQQYLDKNPDGYCPHHSTGIPCGVEA</sequence>
<reference key="1">
    <citation type="journal article" date="2001" name="J. Bacteriol.">
        <title>Cloning of the sodA gene from Corynebacterium melassecola and role of superoxide dismutase in cellular viability.</title>
        <authorList>
            <person name="Merkamm M."/>
            <person name="Guyonvarch A."/>
        </authorList>
    </citation>
    <scope>NUCLEOTIDE SEQUENCE [GENOMIC DNA]</scope>
    <source>
        <strain>ATCC 17965 / AS B-4821</strain>
    </source>
</reference>
<organism>
    <name type="scientific">Corynebacterium melassecola</name>
    <dbReference type="NCBI Taxonomy" id="41643"/>
    <lineage>
        <taxon>Bacteria</taxon>
        <taxon>Bacillati</taxon>
        <taxon>Actinomycetota</taxon>
        <taxon>Actinomycetes</taxon>
        <taxon>Mycobacteriales</taxon>
        <taxon>Corynebacteriaceae</taxon>
        <taxon>Corynebacterium</taxon>
    </lineage>
</organism>
<proteinExistence type="inferred from homology"/>